<reference key="1">
    <citation type="journal article" date="2005" name="Genome Res.">
        <title>Coping with cold: the genome of the versatile marine Antarctica bacterium Pseudoalteromonas haloplanktis TAC125.</title>
        <authorList>
            <person name="Medigue C."/>
            <person name="Krin E."/>
            <person name="Pascal G."/>
            <person name="Barbe V."/>
            <person name="Bernsel A."/>
            <person name="Bertin P.N."/>
            <person name="Cheung F."/>
            <person name="Cruveiller S."/>
            <person name="D'Amico S."/>
            <person name="Duilio A."/>
            <person name="Fang G."/>
            <person name="Feller G."/>
            <person name="Ho C."/>
            <person name="Mangenot S."/>
            <person name="Marino G."/>
            <person name="Nilsson J."/>
            <person name="Parrilli E."/>
            <person name="Rocha E.P.C."/>
            <person name="Rouy Z."/>
            <person name="Sekowska A."/>
            <person name="Tutino M.L."/>
            <person name="Vallenet D."/>
            <person name="von Heijne G."/>
            <person name="Danchin A."/>
        </authorList>
    </citation>
    <scope>NUCLEOTIDE SEQUENCE [LARGE SCALE GENOMIC DNA]</scope>
    <source>
        <strain>TAC 125</strain>
    </source>
</reference>
<organism>
    <name type="scientific">Pseudoalteromonas translucida (strain TAC 125)</name>
    <dbReference type="NCBI Taxonomy" id="326442"/>
    <lineage>
        <taxon>Bacteria</taxon>
        <taxon>Pseudomonadati</taxon>
        <taxon>Pseudomonadota</taxon>
        <taxon>Gammaproteobacteria</taxon>
        <taxon>Alteromonadales</taxon>
        <taxon>Pseudoalteromonadaceae</taxon>
        <taxon>Pseudoalteromonas</taxon>
    </lineage>
</organism>
<sequence>MSIYFSGLMAPLDKNNVDTDQIIPKQFLTSTSREGFDAALFYDWRYLENDEPNPDFILNRPCYQGAQILLTRDNFGCGSSREHAPWALKQYGFEVILAESFADIFFNNCGNNQMLAIALPGDTLEQLFVLSEQHDDIHIDIDLENQTLTSTKFAPISFDIRKDVKERLLSGLDFIGVTETLNPQIDAFEQQLAAERPWQ</sequence>
<protein>
    <recommendedName>
        <fullName evidence="1">3-isopropylmalate dehydratase small subunit</fullName>
        <ecNumber evidence="1">4.2.1.33</ecNumber>
    </recommendedName>
    <alternativeName>
        <fullName evidence="1">Alpha-IPM isomerase</fullName>
        <shortName evidence="1">IPMI</shortName>
    </alternativeName>
    <alternativeName>
        <fullName evidence="1">Isopropylmalate isomerase</fullName>
    </alternativeName>
</protein>
<gene>
    <name evidence="1" type="primary">leuD</name>
    <name type="ordered locus">PSHAa2891</name>
</gene>
<feature type="chain" id="PRO_0000141856" description="3-isopropylmalate dehydratase small subunit">
    <location>
        <begin position="1"/>
        <end position="199"/>
    </location>
</feature>
<accession>Q3IJS5</accession>
<name>LEUD_PSET1</name>
<proteinExistence type="inferred from homology"/>
<dbReference type="EC" id="4.2.1.33" evidence="1"/>
<dbReference type="EMBL" id="CR954246">
    <property type="protein sequence ID" value="CAI87927.1"/>
    <property type="molecule type" value="Genomic_DNA"/>
</dbReference>
<dbReference type="SMR" id="Q3IJS5"/>
<dbReference type="STRING" id="326442.PSHAa2891"/>
<dbReference type="KEGG" id="pha:PSHAa2891"/>
<dbReference type="eggNOG" id="COG0066">
    <property type="taxonomic scope" value="Bacteria"/>
</dbReference>
<dbReference type="HOGENOM" id="CLU_081378_0_3_6"/>
<dbReference type="BioCyc" id="PHAL326442:PSHA_RS14190-MONOMER"/>
<dbReference type="UniPathway" id="UPA00048">
    <property type="reaction ID" value="UER00071"/>
</dbReference>
<dbReference type="Proteomes" id="UP000006843">
    <property type="component" value="Chromosome I"/>
</dbReference>
<dbReference type="GO" id="GO:0009316">
    <property type="term" value="C:3-isopropylmalate dehydratase complex"/>
    <property type="evidence" value="ECO:0007669"/>
    <property type="project" value="InterPro"/>
</dbReference>
<dbReference type="GO" id="GO:0003861">
    <property type="term" value="F:3-isopropylmalate dehydratase activity"/>
    <property type="evidence" value="ECO:0007669"/>
    <property type="project" value="UniProtKB-UniRule"/>
</dbReference>
<dbReference type="GO" id="GO:0009098">
    <property type="term" value="P:L-leucine biosynthetic process"/>
    <property type="evidence" value="ECO:0007669"/>
    <property type="project" value="UniProtKB-UniRule"/>
</dbReference>
<dbReference type="CDD" id="cd01577">
    <property type="entry name" value="IPMI_Swivel"/>
    <property type="match status" value="1"/>
</dbReference>
<dbReference type="FunFam" id="3.20.19.10:FF:000003">
    <property type="entry name" value="3-isopropylmalate dehydratase small subunit"/>
    <property type="match status" value="1"/>
</dbReference>
<dbReference type="Gene3D" id="3.20.19.10">
    <property type="entry name" value="Aconitase, domain 4"/>
    <property type="match status" value="1"/>
</dbReference>
<dbReference type="HAMAP" id="MF_01031">
    <property type="entry name" value="LeuD_type1"/>
    <property type="match status" value="1"/>
</dbReference>
<dbReference type="InterPro" id="IPR004431">
    <property type="entry name" value="3-IsopropMal_deHydase_ssu"/>
</dbReference>
<dbReference type="InterPro" id="IPR015928">
    <property type="entry name" value="Aconitase/3IPM_dehydase_swvl"/>
</dbReference>
<dbReference type="InterPro" id="IPR000573">
    <property type="entry name" value="AconitaseA/IPMdHydase_ssu_swvl"/>
</dbReference>
<dbReference type="InterPro" id="IPR033940">
    <property type="entry name" value="IPMI_Swivel"/>
</dbReference>
<dbReference type="InterPro" id="IPR050075">
    <property type="entry name" value="LeuD"/>
</dbReference>
<dbReference type="NCBIfam" id="TIGR00171">
    <property type="entry name" value="leuD"/>
    <property type="match status" value="1"/>
</dbReference>
<dbReference type="NCBIfam" id="NF002458">
    <property type="entry name" value="PRK01641.1"/>
    <property type="match status" value="1"/>
</dbReference>
<dbReference type="PANTHER" id="PTHR43345:SF5">
    <property type="entry name" value="3-ISOPROPYLMALATE DEHYDRATASE SMALL SUBUNIT"/>
    <property type="match status" value="1"/>
</dbReference>
<dbReference type="PANTHER" id="PTHR43345">
    <property type="entry name" value="3-ISOPROPYLMALATE DEHYDRATASE SMALL SUBUNIT 2-RELATED-RELATED"/>
    <property type="match status" value="1"/>
</dbReference>
<dbReference type="Pfam" id="PF00694">
    <property type="entry name" value="Aconitase_C"/>
    <property type="match status" value="1"/>
</dbReference>
<dbReference type="SUPFAM" id="SSF52016">
    <property type="entry name" value="LeuD/IlvD-like"/>
    <property type="match status" value="1"/>
</dbReference>
<comment type="function">
    <text evidence="1">Catalyzes the isomerization between 2-isopropylmalate and 3-isopropylmalate, via the formation of 2-isopropylmaleate.</text>
</comment>
<comment type="catalytic activity">
    <reaction evidence="1">
        <text>(2R,3S)-3-isopropylmalate = (2S)-2-isopropylmalate</text>
        <dbReference type="Rhea" id="RHEA:32287"/>
        <dbReference type="ChEBI" id="CHEBI:1178"/>
        <dbReference type="ChEBI" id="CHEBI:35121"/>
        <dbReference type="EC" id="4.2.1.33"/>
    </reaction>
</comment>
<comment type="pathway">
    <text evidence="1">Amino-acid biosynthesis; L-leucine biosynthesis; L-leucine from 3-methyl-2-oxobutanoate: step 2/4.</text>
</comment>
<comment type="subunit">
    <text evidence="1">Heterodimer of LeuC and LeuD.</text>
</comment>
<comment type="similarity">
    <text evidence="1">Belongs to the LeuD family. LeuD type 1 subfamily.</text>
</comment>
<keyword id="KW-0028">Amino-acid biosynthesis</keyword>
<keyword id="KW-0100">Branched-chain amino acid biosynthesis</keyword>
<keyword id="KW-0432">Leucine biosynthesis</keyword>
<keyword id="KW-0456">Lyase</keyword>
<keyword id="KW-1185">Reference proteome</keyword>
<evidence type="ECO:0000255" key="1">
    <source>
        <dbReference type="HAMAP-Rule" id="MF_01031"/>
    </source>
</evidence>